<protein>
    <recommendedName>
        <fullName>Putative hydrolase YtaP</fullName>
        <ecNumber>3.-.-.-</ecNumber>
    </recommendedName>
</protein>
<evidence type="ECO:0000305" key="1"/>
<name>YTAP_BACSU</name>
<gene>
    <name type="primary">ytaP</name>
    <name type="ordered locus">BSU30250</name>
</gene>
<accession>O34973</accession>
<accession>Q795R1</accession>
<organism>
    <name type="scientific">Bacillus subtilis (strain 168)</name>
    <dbReference type="NCBI Taxonomy" id="224308"/>
    <lineage>
        <taxon>Bacteria</taxon>
        <taxon>Bacillati</taxon>
        <taxon>Bacillota</taxon>
        <taxon>Bacilli</taxon>
        <taxon>Bacillales</taxon>
        <taxon>Bacillaceae</taxon>
        <taxon>Bacillus</taxon>
    </lineage>
</organism>
<reference key="1">
    <citation type="journal article" date="1997" name="Microbiology">
        <title>Sequencing and functional annotation of the Bacillus subtilis genes in the 200 kb rrnB-dnaB region.</title>
        <authorList>
            <person name="Lapidus A."/>
            <person name="Galleron N."/>
            <person name="Sorokin A."/>
            <person name="Ehrlich S.D."/>
        </authorList>
    </citation>
    <scope>NUCLEOTIDE SEQUENCE [GENOMIC DNA]</scope>
    <source>
        <strain>168</strain>
    </source>
</reference>
<reference key="2">
    <citation type="journal article" date="1997" name="Nature">
        <title>The complete genome sequence of the Gram-positive bacterium Bacillus subtilis.</title>
        <authorList>
            <person name="Kunst F."/>
            <person name="Ogasawara N."/>
            <person name="Moszer I."/>
            <person name="Albertini A.M."/>
            <person name="Alloni G."/>
            <person name="Azevedo V."/>
            <person name="Bertero M.G."/>
            <person name="Bessieres P."/>
            <person name="Bolotin A."/>
            <person name="Borchert S."/>
            <person name="Borriss R."/>
            <person name="Boursier L."/>
            <person name="Brans A."/>
            <person name="Braun M."/>
            <person name="Brignell S.C."/>
            <person name="Bron S."/>
            <person name="Brouillet S."/>
            <person name="Bruschi C.V."/>
            <person name="Caldwell B."/>
            <person name="Capuano V."/>
            <person name="Carter N.M."/>
            <person name="Choi S.-K."/>
            <person name="Codani J.-J."/>
            <person name="Connerton I.F."/>
            <person name="Cummings N.J."/>
            <person name="Daniel R.A."/>
            <person name="Denizot F."/>
            <person name="Devine K.M."/>
            <person name="Duesterhoeft A."/>
            <person name="Ehrlich S.D."/>
            <person name="Emmerson P.T."/>
            <person name="Entian K.-D."/>
            <person name="Errington J."/>
            <person name="Fabret C."/>
            <person name="Ferrari E."/>
            <person name="Foulger D."/>
            <person name="Fritz C."/>
            <person name="Fujita M."/>
            <person name="Fujita Y."/>
            <person name="Fuma S."/>
            <person name="Galizzi A."/>
            <person name="Galleron N."/>
            <person name="Ghim S.-Y."/>
            <person name="Glaser P."/>
            <person name="Goffeau A."/>
            <person name="Golightly E.J."/>
            <person name="Grandi G."/>
            <person name="Guiseppi G."/>
            <person name="Guy B.J."/>
            <person name="Haga K."/>
            <person name="Haiech J."/>
            <person name="Harwood C.R."/>
            <person name="Henaut A."/>
            <person name="Hilbert H."/>
            <person name="Holsappel S."/>
            <person name="Hosono S."/>
            <person name="Hullo M.-F."/>
            <person name="Itaya M."/>
            <person name="Jones L.-M."/>
            <person name="Joris B."/>
            <person name="Karamata D."/>
            <person name="Kasahara Y."/>
            <person name="Klaerr-Blanchard M."/>
            <person name="Klein C."/>
            <person name="Kobayashi Y."/>
            <person name="Koetter P."/>
            <person name="Koningstein G."/>
            <person name="Krogh S."/>
            <person name="Kumano M."/>
            <person name="Kurita K."/>
            <person name="Lapidus A."/>
            <person name="Lardinois S."/>
            <person name="Lauber J."/>
            <person name="Lazarevic V."/>
            <person name="Lee S.-M."/>
            <person name="Levine A."/>
            <person name="Liu H."/>
            <person name="Masuda S."/>
            <person name="Mauel C."/>
            <person name="Medigue C."/>
            <person name="Medina N."/>
            <person name="Mellado R.P."/>
            <person name="Mizuno M."/>
            <person name="Moestl D."/>
            <person name="Nakai S."/>
            <person name="Noback M."/>
            <person name="Noone D."/>
            <person name="O'Reilly M."/>
            <person name="Ogawa K."/>
            <person name="Ogiwara A."/>
            <person name="Oudega B."/>
            <person name="Park S.-H."/>
            <person name="Parro V."/>
            <person name="Pohl T.M."/>
            <person name="Portetelle D."/>
            <person name="Porwollik S."/>
            <person name="Prescott A.M."/>
            <person name="Presecan E."/>
            <person name="Pujic P."/>
            <person name="Purnelle B."/>
            <person name="Rapoport G."/>
            <person name="Rey M."/>
            <person name="Reynolds S."/>
            <person name="Rieger M."/>
            <person name="Rivolta C."/>
            <person name="Rocha E."/>
            <person name="Roche B."/>
            <person name="Rose M."/>
            <person name="Sadaie Y."/>
            <person name="Sato T."/>
            <person name="Scanlan E."/>
            <person name="Schleich S."/>
            <person name="Schroeter R."/>
            <person name="Scoffone F."/>
            <person name="Sekiguchi J."/>
            <person name="Sekowska A."/>
            <person name="Seror S.J."/>
            <person name="Serror P."/>
            <person name="Shin B.-S."/>
            <person name="Soldo B."/>
            <person name="Sorokin A."/>
            <person name="Tacconi E."/>
            <person name="Takagi T."/>
            <person name="Takahashi H."/>
            <person name="Takemaru K."/>
            <person name="Takeuchi M."/>
            <person name="Tamakoshi A."/>
            <person name="Tanaka T."/>
            <person name="Terpstra P."/>
            <person name="Tognoni A."/>
            <person name="Tosato V."/>
            <person name="Uchiyama S."/>
            <person name="Vandenbol M."/>
            <person name="Vannier F."/>
            <person name="Vassarotti A."/>
            <person name="Viari A."/>
            <person name="Wambutt R."/>
            <person name="Wedler E."/>
            <person name="Wedler H."/>
            <person name="Weitzenegger T."/>
            <person name="Winters P."/>
            <person name="Wipat A."/>
            <person name="Yamamoto H."/>
            <person name="Yamane K."/>
            <person name="Yasumoto K."/>
            <person name="Yata K."/>
            <person name="Yoshida K."/>
            <person name="Yoshikawa H.-F."/>
            <person name="Zumstein E."/>
            <person name="Yoshikawa H."/>
            <person name="Danchin A."/>
        </authorList>
    </citation>
    <scope>NUCLEOTIDE SEQUENCE [LARGE SCALE GENOMIC DNA]</scope>
    <source>
        <strain>168</strain>
    </source>
</reference>
<dbReference type="EC" id="3.-.-.-"/>
<dbReference type="EMBL" id="AF008220">
    <property type="protein sequence ID" value="AAC00260.1"/>
    <property type="molecule type" value="Genomic_DNA"/>
</dbReference>
<dbReference type="EMBL" id="AL009126">
    <property type="protein sequence ID" value="CAB15003.1"/>
    <property type="molecule type" value="Genomic_DNA"/>
</dbReference>
<dbReference type="PIR" id="B69988">
    <property type="entry name" value="B69988"/>
</dbReference>
<dbReference type="RefSeq" id="NP_390903.1">
    <property type="nucleotide sequence ID" value="NC_000964.3"/>
</dbReference>
<dbReference type="RefSeq" id="WP_004398709.1">
    <property type="nucleotide sequence ID" value="NZ_OZ025638.1"/>
</dbReference>
<dbReference type="SMR" id="O34973"/>
<dbReference type="FunCoup" id="O34973">
    <property type="interactions" value="21"/>
</dbReference>
<dbReference type="STRING" id="224308.BSU30250"/>
<dbReference type="ESTHER" id="bacsu-YTAP">
    <property type="family name" value="Abhydrolase_7"/>
</dbReference>
<dbReference type="PaxDb" id="224308-BSU30250"/>
<dbReference type="EnsemblBacteria" id="CAB15003">
    <property type="protein sequence ID" value="CAB15003"/>
    <property type="gene ID" value="BSU_30250"/>
</dbReference>
<dbReference type="GeneID" id="937263"/>
<dbReference type="KEGG" id="bsu:BSU30250"/>
<dbReference type="PATRIC" id="fig|224308.179.peg.3281"/>
<dbReference type="eggNOG" id="COG1073">
    <property type="taxonomic scope" value="Bacteria"/>
</dbReference>
<dbReference type="InParanoid" id="O34973"/>
<dbReference type="OrthoDB" id="8183145at2"/>
<dbReference type="PhylomeDB" id="O34973"/>
<dbReference type="BioCyc" id="BSUB:BSU30250-MONOMER"/>
<dbReference type="Proteomes" id="UP000001570">
    <property type="component" value="Chromosome"/>
</dbReference>
<dbReference type="GO" id="GO:0004252">
    <property type="term" value="F:serine-type endopeptidase activity"/>
    <property type="evidence" value="ECO:0007669"/>
    <property type="project" value="InterPro"/>
</dbReference>
<dbReference type="GO" id="GO:0006508">
    <property type="term" value="P:proteolysis"/>
    <property type="evidence" value="ECO:0007669"/>
    <property type="project" value="InterPro"/>
</dbReference>
<dbReference type="Gene3D" id="3.40.50.1820">
    <property type="entry name" value="alpha/beta hydrolase"/>
    <property type="match status" value="1"/>
</dbReference>
<dbReference type="InterPro" id="IPR029058">
    <property type="entry name" value="AB_hydrolase_fold"/>
</dbReference>
<dbReference type="InterPro" id="IPR002925">
    <property type="entry name" value="Dienelactn_hydro"/>
</dbReference>
<dbReference type="InterPro" id="IPR002471">
    <property type="entry name" value="Pept_S9_AS"/>
</dbReference>
<dbReference type="PANTHER" id="PTHR47381">
    <property type="entry name" value="ALPHA/BETA-HYDROLASES SUPERFAMILY PROTEIN"/>
    <property type="match status" value="1"/>
</dbReference>
<dbReference type="PANTHER" id="PTHR47381:SF3">
    <property type="entry name" value="ALPHA_BETA-HYDROLASES SUPERFAMILY PROTEIN"/>
    <property type="match status" value="1"/>
</dbReference>
<dbReference type="Pfam" id="PF01738">
    <property type="entry name" value="DLH"/>
    <property type="match status" value="1"/>
</dbReference>
<dbReference type="SUPFAM" id="SSF53474">
    <property type="entry name" value="alpha/beta-Hydrolases"/>
    <property type="match status" value="1"/>
</dbReference>
<dbReference type="PROSITE" id="PS00708">
    <property type="entry name" value="PRO_ENDOPEP_SER"/>
    <property type="match status" value="1"/>
</dbReference>
<proteinExistence type="inferred from homology"/>
<keyword id="KW-0378">Hydrolase</keyword>
<keyword id="KW-1185">Reference proteome</keyword>
<sequence length="299" mass="33777">MRAERRKQLFRLLGDLPDRRPISVETLRIEEREENIVETLLLDLNGHEKAPAYFVKPKKTEGPCPAVLFQHSHGGQYDRGKSELIEGADYLKTPSFSDELTSLGYGVLAIDHWGFGDRRGKAESEIFKEMLLTGKVMWGMMIYDSLSALDYMQSRSDVQPDRIGTIGMSMGGLMAWWTAALDDRIKVCVDLCSQVDHHVLIKTQNLDRHGFYYYVPSLAKHFSASEIQSLIAPRPHLSLVGVHDRLTPAEGVDKIEKELTAVYAGQGAADCYRVVRSASGHFETAVIRHEAVRFLQKWL</sequence>
<comment type="similarity">
    <text evidence="1">Belongs to the dienelactone hydrolase family.</text>
</comment>
<feature type="chain" id="PRO_0000389260" description="Putative hydrolase YtaP">
    <location>
        <begin position="1"/>
        <end position="299"/>
    </location>
</feature>